<reference key="1">
    <citation type="journal article" date="2007" name="Photosyn. Res.">
        <title>Complete nucleotide sequence of the freshwater unicellular cyanobacterium Synechococcus elongatus PCC 6301 chromosome: gene content and organization.</title>
        <authorList>
            <person name="Sugita C."/>
            <person name="Ogata K."/>
            <person name="Shikata M."/>
            <person name="Jikuya H."/>
            <person name="Takano J."/>
            <person name="Furumichi M."/>
            <person name="Kanehisa M."/>
            <person name="Omata T."/>
            <person name="Sugiura M."/>
            <person name="Sugita M."/>
        </authorList>
    </citation>
    <scope>NUCLEOTIDE SEQUENCE [LARGE SCALE GENOMIC DNA]</scope>
    <source>
        <strain>ATCC 27144 / PCC 6301 / SAUG 1402/1</strain>
    </source>
</reference>
<dbReference type="EMBL" id="AP008231">
    <property type="protein sequence ID" value="BAD78709.1"/>
    <property type="status" value="ALT_INIT"/>
    <property type="molecule type" value="Genomic_DNA"/>
</dbReference>
<dbReference type="SMR" id="Q5N4R0"/>
<dbReference type="KEGG" id="syc:syc0519_c"/>
<dbReference type="eggNOG" id="COG2052">
    <property type="taxonomic scope" value="Bacteria"/>
</dbReference>
<dbReference type="Proteomes" id="UP000001175">
    <property type="component" value="Chromosome"/>
</dbReference>
<dbReference type="HAMAP" id="MF_01503">
    <property type="entry name" value="RemA"/>
    <property type="match status" value="1"/>
</dbReference>
<dbReference type="InterPro" id="IPR007169">
    <property type="entry name" value="RemA-like"/>
</dbReference>
<dbReference type="NCBIfam" id="NF003315">
    <property type="entry name" value="PRK04323.1"/>
    <property type="match status" value="1"/>
</dbReference>
<dbReference type="PANTHER" id="PTHR38449:SF1">
    <property type="entry name" value="REGULATORY PROTEIN SSL2874-RELATED"/>
    <property type="match status" value="1"/>
</dbReference>
<dbReference type="PANTHER" id="PTHR38449">
    <property type="entry name" value="REGULATORY PROTEIN TM_1690-RELATED"/>
    <property type="match status" value="1"/>
</dbReference>
<dbReference type="Pfam" id="PF04025">
    <property type="entry name" value="RemA-like"/>
    <property type="match status" value="1"/>
</dbReference>
<proteinExistence type="inferred from homology"/>
<name>Y519_SYNP6</name>
<gene>
    <name type="ordered locus">syc0519_c</name>
</gene>
<sequence length="87" mass="9097">MAQALLNAGFGNFVAADRLIAIVSPDSAPIRRTVSEARERGQLVDVTCGRRTKAVLIADSGHVILSALQPETIAGRILNSRGDLSGA</sequence>
<accession>Q5N4R0</accession>
<organism>
    <name type="scientific">Synechococcus sp. (strain ATCC 27144 / PCC 6301 / SAUG 1402/1)</name>
    <name type="common">Anacystis nidulans</name>
    <dbReference type="NCBI Taxonomy" id="269084"/>
    <lineage>
        <taxon>Bacteria</taxon>
        <taxon>Bacillati</taxon>
        <taxon>Cyanobacteriota</taxon>
        <taxon>Cyanophyceae</taxon>
        <taxon>Synechococcales</taxon>
        <taxon>Synechococcaceae</taxon>
        <taxon>Synechococcus</taxon>
    </lineage>
</organism>
<comment type="similarity">
    <text evidence="1">Belongs to the RemA family.</text>
</comment>
<comment type="sequence caution" evidence="2">
    <conflict type="erroneous initiation">
        <sequence resource="EMBL-CDS" id="BAD78709"/>
    </conflict>
</comment>
<feature type="chain" id="PRO_0000050237" description="Putative regulatory protein syc0519_c">
    <location>
        <begin position="1"/>
        <end position="87"/>
    </location>
</feature>
<protein>
    <recommendedName>
        <fullName evidence="1">Putative regulatory protein syc0519_c</fullName>
    </recommendedName>
</protein>
<evidence type="ECO:0000255" key="1">
    <source>
        <dbReference type="HAMAP-Rule" id="MF_01503"/>
    </source>
</evidence>
<evidence type="ECO:0000305" key="2"/>